<keyword id="KW-0007">Acetylation</keyword>
<keyword id="KW-0287">Flowering</keyword>
<keyword id="KW-0539">Nucleus</keyword>
<keyword id="KW-0597">Phosphoprotein</keyword>
<keyword id="KW-1185">Reference proteome</keyword>
<keyword id="KW-0804">Transcription</keyword>
<keyword id="KW-0805">Transcription regulation</keyword>
<comment type="function">
    <text evidence="4 5 6">Component of the PAF1 complex (PAF1C) which is involved in histone modifications such as methylation on histone H3 'Lys-4' (H3K4me3) (PubMed:20363855). Involved in regulation of flowering time. Required for the expression of the flowering repressors and FLC and MADS-box genes of the MAF family (PubMed:15472079). Involved in the control of seed dormancy and germination (PubMed:21799800).</text>
</comment>
<comment type="subunit">
    <text evidence="5">Component of the nuclear PAF1 complex (PAF1C), which consists of VIP2/ELF7/PAF1, VIP3/SKI8/WDR61, VIP4/LEO1, VIP5/RTF1, VIP6/ELF8/CTR9 and CDC73.</text>
</comment>
<comment type="subcellular location">
    <subcellularLocation>
        <location evidence="5">Nucleus</location>
    </subcellularLocation>
</comment>
<comment type="disruption phenotype">
    <text evidence="3 6">Early flowering, reduced plant size and defects in floral morphology in whorls 1-3, but fully fertile flowers (PubMed:12750345). Reduced seed dormancy and increased germination rate of freshly harvested seeds (PubMed:21799800).</text>
</comment>
<protein>
    <recommendedName>
        <fullName evidence="8">Protein RTF1 homolog</fullName>
    </recommendedName>
    <alternativeName>
        <fullName evidence="7">Protein VERNALIZATION INDEPENDENCE 5</fullName>
    </alternativeName>
</protein>
<name>VIP5_ARATH</name>
<dbReference type="EMBL" id="AC018908">
    <property type="protein sequence ID" value="AAG51642.1"/>
    <property type="molecule type" value="Genomic_DNA"/>
</dbReference>
<dbReference type="EMBL" id="CP002684">
    <property type="protein sequence ID" value="AEE33770.1"/>
    <property type="molecule type" value="Genomic_DNA"/>
</dbReference>
<dbReference type="EMBL" id="CP002684">
    <property type="protein sequence ID" value="ANM60373.1"/>
    <property type="molecule type" value="Genomic_DNA"/>
</dbReference>
<dbReference type="EMBL" id="CP002684">
    <property type="protein sequence ID" value="ANM60374.1"/>
    <property type="molecule type" value="Genomic_DNA"/>
</dbReference>
<dbReference type="EMBL" id="AY091764">
    <property type="protein sequence ID" value="AAM10312.1"/>
    <property type="molecule type" value="mRNA"/>
</dbReference>
<dbReference type="PIR" id="A96636">
    <property type="entry name" value="A96636"/>
</dbReference>
<dbReference type="RefSeq" id="NP_001322666.1">
    <property type="nucleotide sequence ID" value="NM_001333927.1"/>
</dbReference>
<dbReference type="RefSeq" id="NP_001322667.1">
    <property type="nucleotide sequence ID" value="NM_001333926.1"/>
</dbReference>
<dbReference type="RefSeq" id="NP_176299.1">
    <property type="nucleotide sequence ID" value="NM_104784.4"/>
</dbReference>
<dbReference type="SMR" id="Q9C950"/>
<dbReference type="FunCoup" id="Q9C950">
    <property type="interactions" value="4546"/>
</dbReference>
<dbReference type="STRING" id="3702.Q9C950"/>
<dbReference type="iPTMnet" id="Q9C950"/>
<dbReference type="PaxDb" id="3702-AT1G61040.1"/>
<dbReference type="ProteomicsDB" id="246452"/>
<dbReference type="EnsemblPlants" id="AT1G61040.1">
    <property type="protein sequence ID" value="AT1G61040.1"/>
    <property type="gene ID" value="AT1G61040"/>
</dbReference>
<dbReference type="EnsemblPlants" id="AT1G61040.2">
    <property type="protein sequence ID" value="AT1G61040.2"/>
    <property type="gene ID" value="AT1G61040"/>
</dbReference>
<dbReference type="EnsemblPlants" id="AT1G61040.3">
    <property type="protein sequence ID" value="AT1G61040.3"/>
    <property type="gene ID" value="AT1G61040"/>
</dbReference>
<dbReference type="GeneID" id="842395"/>
<dbReference type="Gramene" id="AT1G61040.1">
    <property type="protein sequence ID" value="AT1G61040.1"/>
    <property type="gene ID" value="AT1G61040"/>
</dbReference>
<dbReference type="Gramene" id="AT1G61040.2">
    <property type="protein sequence ID" value="AT1G61040.2"/>
    <property type="gene ID" value="AT1G61040"/>
</dbReference>
<dbReference type="Gramene" id="AT1G61040.3">
    <property type="protein sequence ID" value="AT1G61040.3"/>
    <property type="gene ID" value="AT1G61040"/>
</dbReference>
<dbReference type="KEGG" id="ath:AT1G61040"/>
<dbReference type="Araport" id="AT1G61040"/>
<dbReference type="TAIR" id="AT1G61040">
    <property type="gene designation" value="VIP5"/>
</dbReference>
<dbReference type="eggNOG" id="KOG2402">
    <property type="taxonomic scope" value="Eukaryota"/>
</dbReference>
<dbReference type="HOGENOM" id="CLU_018644_1_1_1"/>
<dbReference type="InParanoid" id="Q9C950"/>
<dbReference type="OMA" id="ISGCYAR"/>
<dbReference type="PhylomeDB" id="Q9C950"/>
<dbReference type="PRO" id="PR:Q9C950"/>
<dbReference type="Proteomes" id="UP000006548">
    <property type="component" value="Chromosome 1"/>
</dbReference>
<dbReference type="ExpressionAtlas" id="Q9C950">
    <property type="expression patterns" value="baseline and differential"/>
</dbReference>
<dbReference type="GO" id="GO:0016593">
    <property type="term" value="C:Cdc73/Paf1 complex"/>
    <property type="evidence" value="ECO:0000314"/>
    <property type="project" value="UniProtKB"/>
</dbReference>
<dbReference type="GO" id="GO:0005634">
    <property type="term" value="C:nucleus"/>
    <property type="evidence" value="ECO:0000314"/>
    <property type="project" value="UniProtKB"/>
</dbReference>
<dbReference type="GO" id="GO:0003677">
    <property type="term" value="F:DNA binding"/>
    <property type="evidence" value="ECO:0007669"/>
    <property type="project" value="InterPro"/>
</dbReference>
<dbReference type="GO" id="GO:0009908">
    <property type="term" value="P:flower development"/>
    <property type="evidence" value="ECO:0007669"/>
    <property type="project" value="UniProtKB-KW"/>
</dbReference>
<dbReference type="GO" id="GO:0009910">
    <property type="term" value="P:negative regulation of flower development"/>
    <property type="evidence" value="ECO:0000315"/>
    <property type="project" value="TAIR"/>
</dbReference>
<dbReference type="GO" id="GO:0045893">
    <property type="term" value="P:positive regulation of DNA-templated transcription"/>
    <property type="evidence" value="ECO:0000315"/>
    <property type="project" value="TAIR"/>
</dbReference>
<dbReference type="FunFam" id="3.90.70.200:FF:000003">
    <property type="entry name" value="RNA polymerase-associated protein RTF1"/>
    <property type="match status" value="1"/>
</dbReference>
<dbReference type="Gene3D" id="3.90.70.200">
    <property type="entry name" value="Plus-3 domain"/>
    <property type="match status" value="1"/>
</dbReference>
<dbReference type="InterPro" id="IPR004343">
    <property type="entry name" value="Plus-3_dom"/>
</dbReference>
<dbReference type="InterPro" id="IPR036128">
    <property type="entry name" value="Plus3-like_sf"/>
</dbReference>
<dbReference type="PANTHER" id="PTHR13115">
    <property type="entry name" value="RNA POLYMERASE-ASSOCIATED PROTEIN RTF1 HOMOLOG"/>
    <property type="match status" value="1"/>
</dbReference>
<dbReference type="PANTHER" id="PTHR13115:SF8">
    <property type="entry name" value="RNA POLYMERASE-ASSOCIATED PROTEIN RTF1 HOMOLOG"/>
    <property type="match status" value="1"/>
</dbReference>
<dbReference type="Pfam" id="PF03126">
    <property type="entry name" value="Plus-3"/>
    <property type="match status" value="1"/>
</dbReference>
<dbReference type="SMART" id="SM00719">
    <property type="entry name" value="Plus3"/>
    <property type="match status" value="1"/>
</dbReference>
<dbReference type="SUPFAM" id="SSF159042">
    <property type="entry name" value="Plus3-like"/>
    <property type="match status" value="1"/>
</dbReference>
<dbReference type="PROSITE" id="PS51360">
    <property type="entry name" value="PLUS3"/>
    <property type="match status" value="1"/>
</dbReference>
<feature type="initiator methionine" description="Removed" evidence="12">
    <location>
        <position position="1"/>
    </location>
</feature>
<feature type="chain" id="PRO_0000432761" description="Protein RTF1 homolog">
    <location>
        <begin position="2"/>
        <end position="643"/>
    </location>
</feature>
<feature type="domain" description="Plus3" evidence="1">
    <location>
        <begin position="261"/>
        <end position="396"/>
    </location>
</feature>
<feature type="region of interest" description="Disordered" evidence="2">
    <location>
        <begin position="1"/>
        <end position="107"/>
    </location>
</feature>
<feature type="region of interest" description="Disordered" evidence="2">
    <location>
        <begin position="124"/>
        <end position="262"/>
    </location>
</feature>
<feature type="compositionally biased region" description="Basic and acidic residues" evidence="2">
    <location>
        <begin position="65"/>
        <end position="77"/>
    </location>
</feature>
<feature type="compositionally biased region" description="Basic and acidic residues" evidence="2">
    <location>
        <begin position="124"/>
        <end position="157"/>
    </location>
</feature>
<feature type="compositionally biased region" description="Low complexity" evidence="2">
    <location>
        <begin position="162"/>
        <end position="171"/>
    </location>
</feature>
<feature type="compositionally biased region" description="Basic and acidic residues" evidence="2">
    <location>
        <begin position="172"/>
        <end position="188"/>
    </location>
</feature>
<feature type="compositionally biased region" description="Low complexity" evidence="2">
    <location>
        <begin position="225"/>
        <end position="235"/>
    </location>
</feature>
<feature type="modified residue" description="N-acetylglycine" evidence="12">
    <location>
        <position position="2"/>
    </location>
</feature>
<feature type="modified residue" description="Phosphoserine" evidence="11">
    <location>
        <position position="87"/>
    </location>
</feature>
<feature type="sequence conflict" description="In Ref. 3; AAM10312." evidence="8" ref="3">
    <original>R</original>
    <variation>S</variation>
    <location>
        <position position="22"/>
    </location>
</feature>
<evidence type="ECO:0000255" key="1">
    <source>
        <dbReference type="PROSITE-ProRule" id="PRU00693"/>
    </source>
</evidence>
<evidence type="ECO:0000256" key="2">
    <source>
        <dbReference type="SAM" id="MobiDB-lite"/>
    </source>
</evidence>
<evidence type="ECO:0000269" key="3">
    <source>
    </source>
</evidence>
<evidence type="ECO:0000269" key="4">
    <source>
    </source>
</evidence>
<evidence type="ECO:0000269" key="5">
    <source>
    </source>
</evidence>
<evidence type="ECO:0000269" key="6">
    <source>
    </source>
</evidence>
<evidence type="ECO:0000303" key="7">
    <source>
    </source>
</evidence>
<evidence type="ECO:0000305" key="8"/>
<evidence type="ECO:0000312" key="9">
    <source>
        <dbReference type="Araport" id="AT1G61040"/>
    </source>
</evidence>
<evidence type="ECO:0000312" key="10">
    <source>
        <dbReference type="EMBL" id="AAG51642.1"/>
    </source>
</evidence>
<evidence type="ECO:0007744" key="11">
    <source>
    </source>
</evidence>
<evidence type="ECO:0007744" key="12">
    <source>
    </source>
</evidence>
<gene>
    <name evidence="7" type="primary">VIP5</name>
    <name evidence="9" type="ordered locus">At1g61040</name>
    <name evidence="10" type="ORF">T7P1.17</name>
</gene>
<accession>Q9C950</accession>
<accession>Q8RWR3</accession>
<proteinExistence type="evidence at protein level"/>
<sequence>MGDLENLLLEAAGRTNSAGRSRHPPSSRRREGSYSDGSSDSRDDSDEDRGYASRKPSGSQVPLKKRLEAEREDRAARVEGGYGDGPSDREGDSSEESDFGDDLYKNEEDRQKLAGMTEFQREMILSERADKKGDKNFTEKLRSKRESEKTPVSKKETQPLPASRGVRSSARSADRAAAKDDALNELRAKRMKQQDPAALRKLRDASKGGSGSRDFSSTKRKPLASSNLSSSSQSDSDSRSQSDDEGSNGGMLDSDDDRSDVPTFEDVKEVTIRRSKLAKWLMEPFFEELIVGCFVRVGIGRSKSGPIYRLCWVKNVDATDPDKTYKLENKTTHKYLNVVWGNETSAARWQMAMISDGHPLEEEYRQWIREVERTNGRMPTKQDISEKKEAIQRTNSFVYSAETVKQMLQEKKSASVRPMNVAAEKDRLRKELEIAQSKNDEAGVERIKSKIKQLDASRNKKGVDKKALKLAEMNKKNRAENFKNASEVKSITASLKAGEAGYDPFSRRWTRSSNYYNGKNKGKDGEENEAAVAAAVETNGADAGAGVEATEAALEAAAEAGKLIDTRAPIGQGAEHNQLHNFELSLSLTALQKYGGPQGVQKAFMARKQLTEATVGCRVAENDGKRHGLTLTVSDYKRRRGLL</sequence>
<reference key="1">
    <citation type="journal article" date="2000" name="Nature">
        <title>Sequence and analysis of chromosome 1 of the plant Arabidopsis thaliana.</title>
        <authorList>
            <person name="Theologis A."/>
            <person name="Ecker J.R."/>
            <person name="Palm C.J."/>
            <person name="Federspiel N.A."/>
            <person name="Kaul S."/>
            <person name="White O."/>
            <person name="Alonso J."/>
            <person name="Altafi H."/>
            <person name="Araujo R."/>
            <person name="Bowman C.L."/>
            <person name="Brooks S.Y."/>
            <person name="Buehler E."/>
            <person name="Chan A."/>
            <person name="Chao Q."/>
            <person name="Chen H."/>
            <person name="Cheuk R.F."/>
            <person name="Chin C.W."/>
            <person name="Chung M.K."/>
            <person name="Conn L."/>
            <person name="Conway A.B."/>
            <person name="Conway A.R."/>
            <person name="Creasy T.H."/>
            <person name="Dewar K."/>
            <person name="Dunn P."/>
            <person name="Etgu P."/>
            <person name="Feldblyum T.V."/>
            <person name="Feng J.-D."/>
            <person name="Fong B."/>
            <person name="Fujii C.Y."/>
            <person name="Gill J.E."/>
            <person name="Goldsmith A.D."/>
            <person name="Haas B."/>
            <person name="Hansen N.F."/>
            <person name="Hughes B."/>
            <person name="Huizar L."/>
            <person name="Hunter J.L."/>
            <person name="Jenkins J."/>
            <person name="Johnson-Hopson C."/>
            <person name="Khan S."/>
            <person name="Khaykin E."/>
            <person name="Kim C.J."/>
            <person name="Koo H.L."/>
            <person name="Kremenetskaia I."/>
            <person name="Kurtz D.B."/>
            <person name="Kwan A."/>
            <person name="Lam B."/>
            <person name="Langin-Hooper S."/>
            <person name="Lee A."/>
            <person name="Lee J.M."/>
            <person name="Lenz C.A."/>
            <person name="Li J.H."/>
            <person name="Li Y.-P."/>
            <person name="Lin X."/>
            <person name="Liu S.X."/>
            <person name="Liu Z.A."/>
            <person name="Luros J.S."/>
            <person name="Maiti R."/>
            <person name="Marziali A."/>
            <person name="Militscher J."/>
            <person name="Miranda M."/>
            <person name="Nguyen M."/>
            <person name="Nierman W.C."/>
            <person name="Osborne B.I."/>
            <person name="Pai G."/>
            <person name="Peterson J."/>
            <person name="Pham P.K."/>
            <person name="Rizzo M."/>
            <person name="Rooney T."/>
            <person name="Rowley D."/>
            <person name="Sakano H."/>
            <person name="Salzberg S.L."/>
            <person name="Schwartz J.R."/>
            <person name="Shinn P."/>
            <person name="Southwick A.M."/>
            <person name="Sun H."/>
            <person name="Tallon L.J."/>
            <person name="Tambunga G."/>
            <person name="Toriumi M.J."/>
            <person name="Town C.D."/>
            <person name="Utterback T."/>
            <person name="Van Aken S."/>
            <person name="Vaysberg M."/>
            <person name="Vysotskaia V.S."/>
            <person name="Walker M."/>
            <person name="Wu D."/>
            <person name="Yu G."/>
            <person name="Fraser C.M."/>
            <person name="Venter J.C."/>
            <person name="Davis R.W."/>
        </authorList>
    </citation>
    <scope>NUCLEOTIDE SEQUENCE [LARGE SCALE GENOMIC DNA]</scope>
    <source>
        <strain>cv. Columbia</strain>
    </source>
</reference>
<reference key="2">
    <citation type="journal article" date="2017" name="Plant J.">
        <title>Araport11: a complete reannotation of the Arabidopsis thaliana reference genome.</title>
        <authorList>
            <person name="Cheng C.Y."/>
            <person name="Krishnakumar V."/>
            <person name="Chan A.P."/>
            <person name="Thibaud-Nissen F."/>
            <person name="Schobel S."/>
            <person name="Town C.D."/>
        </authorList>
    </citation>
    <scope>GENOME REANNOTATION</scope>
    <source>
        <strain>cv. Columbia</strain>
    </source>
</reference>
<reference key="3">
    <citation type="journal article" date="2003" name="Science">
        <title>Empirical analysis of transcriptional activity in the Arabidopsis genome.</title>
        <authorList>
            <person name="Yamada K."/>
            <person name="Lim J."/>
            <person name="Dale J.M."/>
            <person name="Chen H."/>
            <person name="Shinn P."/>
            <person name="Palm C.J."/>
            <person name="Southwick A.M."/>
            <person name="Wu H.C."/>
            <person name="Kim C.J."/>
            <person name="Nguyen M."/>
            <person name="Pham P.K."/>
            <person name="Cheuk R.F."/>
            <person name="Karlin-Newmann G."/>
            <person name="Liu S.X."/>
            <person name="Lam B."/>
            <person name="Sakano H."/>
            <person name="Wu T."/>
            <person name="Yu G."/>
            <person name="Miranda M."/>
            <person name="Quach H.L."/>
            <person name="Tripp M."/>
            <person name="Chang C.H."/>
            <person name="Lee J.M."/>
            <person name="Toriumi M.J."/>
            <person name="Chan M.M."/>
            <person name="Tang C.C."/>
            <person name="Onodera C.S."/>
            <person name="Deng J.M."/>
            <person name="Akiyama K."/>
            <person name="Ansari Y."/>
            <person name="Arakawa T."/>
            <person name="Banh J."/>
            <person name="Banno F."/>
            <person name="Bowser L."/>
            <person name="Brooks S.Y."/>
            <person name="Carninci P."/>
            <person name="Chao Q."/>
            <person name="Choy N."/>
            <person name="Enju A."/>
            <person name="Goldsmith A.D."/>
            <person name="Gurjal M."/>
            <person name="Hansen N.F."/>
            <person name="Hayashizaki Y."/>
            <person name="Johnson-Hopson C."/>
            <person name="Hsuan V.W."/>
            <person name="Iida K."/>
            <person name="Karnes M."/>
            <person name="Khan S."/>
            <person name="Koesema E."/>
            <person name="Ishida J."/>
            <person name="Jiang P.X."/>
            <person name="Jones T."/>
            <person name="Kawai J."/>
            <person name="Kamiya A."/>
            <person name="Meyers C."/>
            <person name="Nakajima M."/>
            <person name="Narusaka M."/>
            <person name="Seki M."/>
            <person name="Sakurai T."/>
            <person name="Satou M."/>
            <person name="Tamse R."/>
            <person name="Vaysberg M."/>
            <person name="Wallender E.K."/>
            <person name="Wong C."/>
            <person name="Yamamura Y."/>
            <person name="Yuan S."/>
            <person name="Shinozaki K."/>
            <person name="Davis R.W."/>
            <person name="Theologis A."/>
            <person name="Ecker J.R."/>
        </authorList>
    </citation>
    <scope>NUCLEOTIDE SEQUENCE [LARGE SCALE MRNA]</scope>
    <source>
        <strain>cv. Columbia</strain>
    </source>
</reference>
<reference key="4">
    <citation type="journal article" date="2003" name="Genetics">
        <title>Genetic analysis of early flowering mutants in Arabidopsis defines a class of pleiotropic developmental regulator required for expression of the flowering-time switch flowering locus C.</title>
        <authorList>
            <person name="Zhang H."/>
            <person name="Ransom C."/>
            <person name="Ludwig P."/>
            <person name="van Nocker S."/>
        </authorList>
    </citation>
    <scope>DISRUPTION PHENOTYPE</scope>
</reference>
<reference key="5">
    <citation type="journal article" date="2004" name="Plant Cell">
        <title>A mechanism related to the yeast transcriptional regulator Paf1c is required for expression of the Arabidopsis FLC/MAF MADS box gene family.</title>
        <authorList>
            <person name="Oh S."/>
            <person name="Zhang H."/>
            <person name="Ludwig P."/>
            <person name="van Nocker S."/>
        </authorList>
    </citation>
    <scope>FUNCTION</scope>
</reference>
<reference key="6">
    <citation type="journal article" date="2009" name="Plant Physiol.">
        <title>Large-scale Arabidopsis phosphoproteome profiling reveals novel chloroplast kinase substrates and phosphorylation networks.</title>
        <authorList>
            <person name="Reiland S."/>
            <person name="Messerli G."/>
            <person name="Baerenfaller K."/>
            <person name="Gerrits B."/>
            <person name="Endler A."/>
            <person name="Grossmann J."/>
            <person name="Gruissem W."/>
            <person name="Baginsky S."/>
        </authorList>
    </citation>
    <scope>PHOSPHORYLATION [LARGE SCALE ANALYSIS] AT SER-87</scope>
    <scope>IDENTIFICATION BY MASS SPECTROMETRY [LARGE SCALE ANALYSIS]</scope>
</reference>
<reference key="7">
    <citation type="journal article" date="2010" name="Plant Physiol.">
        <title>PLANT HOMOLOGOUS TO PARAFIBROMIN is a component of the PAF1 complex and assists in regulating expression of genes within H3K27ME3-enriched chromatin.</title>
        <authorList>
            <person name="Park S."/>
            <person name="Oh S."/>
            <person name="Ek-Ramos J."/>
            <person name="van Nocker S."/>
        </authorList>
    </citation>
    <scope>IDENTIFICATION IN THE PAF1 COMPLEX</scope>
    <scope>FUNCTION</scope>
    <scope>SUBCELLULAR LOCATION</scope>
</reference>
<reference key="8">
    <citation type="journal article" date="2011" name="PLoS ONE">
        <title>Identification of the Arabidopsis REDUCED DORMANCY 2 gene uncovers a role for the polymerase associated factor 1 complex in seed dormancy.</title>
        <authorList>
            <person name="Liu Y."/>
            <person name="Geyer R."/>
            <person name="van Zanten M."/>
            <person name="Carles A."/>
            <person name="Li Y."/>
            <person name="Horold A."/>
            <person name="van Nocker S."/>
            <person name="Soppe W.J."/>
        </authorList>
    </citation>
    <scope>FUNCTION</scope>
    <scope>DISRUPTION PHENOTYPE</scope>
</reference>
<reference key="9">
    <citation type="journal article" date="2012" name="Mol. Cell. Proteomics">
        <title>Comparative large-scale characterisation of plant vs. mammal proteins reveals similar and idiosyncratic N-alpha acetylation features.</title>
        <authorList>
            <person name="Bienvenut W.V."/>
            <person name="Sumpton D."/>
            <person name="Martinez A."/>
            <person name="Lilla S."/>
            <person name="Espagne C."/>
            <person name="Meinnel T."/>
            <person name="Giglione C."/>
        </authorList>
    </citation>
    <scope>ACETYLATION [LARGE SCALE ANALYSIS] AT GLY-2</scope>
    <scope>CLEAVAGE OF INITIATOR METHIONINE [LARGE SCALE ANALYSIS]</scope>
    <scope>IDENTIFICATION BY MASS SPECTROMETRY [LARGE SCALE ANALYSIS]</scope>
</reference>
<organism>
    <name type="scientific">Arabidopsis thaliana</name>
    <name type="common">Mouse-ear cress</name>
    <dbReference type="NCBI Taxonomy" id="3702"/>
    <lineage>
        <taxon>Eukaryota</taxon>
        <taxon>Viridiplantae</taxon>
        <taxon>Streptophyta</taxon>
        <taxon>Embryophyta</taxon>
        <taxon>Tracheophyta</taxon>
        <taxon>Spermatophyta</taxon>
        <taxon>Magnoliopsida</taxon>
        <taxon>eudicotyledons</taxon>
        <taxon>Gunneridae</taxon>
        <taxon>Pentapetalae</taxon>
        <taxon>rosids</taxon>
        <taxon>malvids</taxon>
        <taxon>Brassicales</taxon>
        <taxon>Brassicaceae</taxon>
        <taxon>Camelineae</taxon>
        <taxon>Arabidopsis</taxon>
    </lineage>
</organism>